<dbReference type="EMBL" id="EU926115">
    <property type="protein sequence ID" value="ACI41447.1"/>
    <property type="molecule type" value="mRNA"/>
</dbReference>
<dbReference type="EMBL" id="FM864119">
    <property type="protein sequence ID" value="CAS03716.1"/>
    <property type="molecule type" value="mRNA"/>
</dbReference>
<dbReference type="SMR" id="B6DD31"/>
<dbReference type="TCDB" id="8.B.19.2.6">
    <property type="family name" value="the sea anemone k+ channel blocker toxin, bcstx3 (bcstx3) family"/>
</dbReference>
<dbReference type="ArachnoServer" id="AS001054">
    <property type="toxin name" value="U2-lycotoxin-Ls1c"/>
</dbReference>
<dbReference type="GO" id="GO:0005576">
    <property type="term" value="C:extracellular region"/>
    <property type="evidence" value="ECO:0007669"/>
    <property type="project" value="UniProtKB-SubCell"/>
</dbReference>
<dbReference type="GO" id="GO:0015459">
    <property type="term" value="F:potassium channel regulator activity"/>
    <property type="evidence" value="ECO:0007669"/>
    <property type="project" value="UniProtKB-KW"/>
</dbReference>
<dbReference type="GO" id="GO:0090729">
    <property type="term" value="F:toxin activity"/>
    <property type="evidence" value="ECO:0007669"/>
    <property type="project" value="UniProtKB-KW"/>
</dbReference>
<dbReference type="InterPro" id="IPR013605">
    <property type="entry name" value="Toxin_34"/>
</dbReference>
<dbReference type="Pfam" id="PF08396">
    <property type="entry name" value="Toxin_34"/>
    <property type="match status" value="1"/>
</dbReference>
<sequence>MIKYVLISALLVVAVYSFTIEDSEDALLEEAEDELDTEEERRMALPPGAVCNGHKSDCQCFGAKYKCSCPFLWRFRRSAKCHCKKGWAWTAIKKRSCHNRYQWSG</sequence>
<evidence type="ECO:0000250" key="1">
    <source>
        <dbReference type="UniProtKB" id="C0HLR8"/>
    </source>
</evidence>
<evidence type="ECO:0000255" key="2"/>
<evidence type="ECO:0000303" key="3">
    <source>
    </source>
</evidence>
<evidence type="ECO:0000305" key="4"/>
<evidence type="ECO:0000305" key="5">
    <source>
    </source>
</evidence>
<reference key="1">
    <citation type="journal article" date="2010" name="Zoology">
        <title>Transcriptome analysis of the venom glands of the Chinese wolf spider Lycosa singoriensis.</title>
        <authorList>
            <person name="Zhang Y."/>
            <person name="Chen J."/>
            <person name="Tang X."/>
            <person name="Wang F."/>
            <person name="Jiang L."/>
            <person name="Xiong X."/>
            <person name="Wang M."/>
            <person name="Rong M."/>
            <person name="Liu Z."/>
            <person name="Liang S."/>
        </authorList>
    </citation>
    <scope>NUCLEOTIDE SEQUENCE [LARGE SCALE MRNA]</scope>
    <source>
        <tissue>Venom gland</tissue>
    </source>
</reference>
<comment type="function">
    <text evidence="1">Insecticidal to house crickets. It induces an excitatory slow-onset impact that leads to irreversible spastic paralysis. It also modifies human voltage-gated potassium channel Kv1.5/KCNA5. Most likely, it binds to the voltage-sensing domain of the channel, suggesting it does not block the pore but prevents its opening at physiological membrane potentials. The recombinant peptide binds to the channel in an irreversible manner and slows down the hKv1.5 current activation kinetics. It is not toxic to mice, when intracranially injected (at 0.5 ug/g mouse).</text>
</comment>
<comment type="subcellular location">
    <subcellularLocation>
        <location evidence="5">Secreted</location>
    </subcellularLocation>
</comment>
<comment type="tissue specificity">
    <text evidence="5">Expressed by the venom gland.</text>
</comment>
<comment type="similarity">
    <text evidence="4">Belongs to the neurotoxin 04 (omega-agtx) family. 01 (type I omega-agtx) subfamily.</text>
</comment>
<proteinExistence type="inferred from homology"/>
<accession>B6DD31</accession>
<protein>
    <recommendedName>
        <fullName evidence="4">U2-lycotoxin-Ls1c</fullName>
        <shortName evidence="4">U2-LCTX-Ls1c</shortName>
    </recommendedName>
    <alternativeName>
        <fullName evidence="3">Toxin LSTX-M3</fullName>
    </alternativeName>
</protein>
<feature type="signal peptide" evidence="2">
    <location>
        <begin position="1"/>
        <end position="17"/>
    </location>
</feature>
<feature type="propeptide" id="PRO_0000401717" evidence="5">
    <location>
        <begin position="18"/>
        <end position="41"/>
    </location>
</feature>
<feature type="chain" id="PRO_0000401718" description="U2-lycotoxin-Ls1c" evidence="5">
    <location>
        <begin position="42"/>
        <end position="105"/>
    </location>
</feature>
<feature type="disulfide bond" evidence="1">
    <location>
        <begin position="51"/>
        <end position="67"/>
    </location>
</feature>
<feature type="disulfide bond" evidence="1">
    <location>
        <begin position="58"/>
        <end position="97"/>
    </location>
</feature>
<feature type="disulfide bond" evidence="1">
    <location>
        <begin position="60"/>
        <end position="83"/>
    </location>
</feature>
<feature type="disulfide bond" evidence="1">
    <location>
        <begin position="69"/>
        <end position="81"/>
    </location>
</feature>
<organism>
    <name type="scientific">Lycosa singoriensis</name>
    <name type="common">Wolf spider</name>
    <name type="synonym">Aranea singoriensis</name>
    <dbReference type="NCBI Taxonomy" id="434756"/>
    <lineage>
        <taxon>Eukaryota</taxon>
        <taxon>Metazoa</taxon>
        <taxon>Ecdysozoa</taxon>
        <taxon>Arthropoda</taxon>
        <taxon>Chelicerata</taxon>
        <taxon>Arachnida</taxon>
        <taxon>Araneae</taxon>
        <taxon>Araneomorphae</taxon>
        <taxon>Entelegynae</taxon>
        <taxon>Lycosoidea</taxon>
        <taxon>Lycosidae</taxon>
        <taxon>Lycosa</taxon>
    </lineage>
</organism>
<name>TX2M3_LYCSI</name>
<keyword id="KW-1015">Disulfide bond</keyword>
<keyword id="KW-0872">Ion channel impairing toxin</keyword>
<keyword id="KW-0528">Neurotoxin</keyword>
<keyword id="KW-0632">Potassium channel impairing toxin</keyword>
<keyword id="KW-0964">Secreted</keyword>
<keyword id="KW-0732">Signal</keyword>
<keyword id="KW-0800">Toxin</keyword>
<keyword id="KW-1220">Voltage-gated potassium channel impairing toxin</keyword>